<keyword id="KW-0574">Periplasm</keyword>
<keyword id="KW-0732">Signal</keyword>
<organism>
    <name type="scientific">Pseudomonas putida (strain W619)</name>
    <dbReference type="NCBI Taxonomy" id="390235"/>
    <lineage>
        <taxon>Bacteria</taxon>
        <taxon>Pseudomonadati</taxon>
        <taxon>Pseudomonadota</taxon>
        <taxon>Gammaproteobacteria</taxon>
        <taxon>Pseudomonadales</taxon>
        <taxon>Pseudomonadaceae</taxon>
        <taxon>Pseudomonas</taxon>
    </lineage>
</organism>
<accession>B1J2R3</accession>
<gene>
    <name evidence="1" type="primary">opgG</name>
    <name type="ordered locus">PputW619_0439</name>
</gene>
<evidence type="ECO:0000255" key="1">
    <source>
        <dbReference type="HAMAP-Rule" id="MF_01069"/>
    </source>
</evidence>
<evidence type="ECO:0000256" key="2">
    <source>
        <dbReference type="SAM" id="MobiDB-lite"/>
    </source>
</evidence>
<protein>
    <recommendedName>
        <fullName evidence="1">Glucans biosynthesis protein G</fullName>
    </recommendedName>
</protein>
<reference key="1">
    <citation type="submission" date="2008-02" db="EMBL/GenBank/DDBJ databases">
        <title>Complete sequence of Pseudomonas putida W619.</title>
        <authorList>
            <person name="Copeland A."/>
            <person name="Lucas S."/>
            <person name="Lapidus A."/>
            <person name="Barry K."/>
            <person name="Detter J.C."/>
            <person name="Glavina del Rio T."/>
            <person name="Dalin E."/>
            <person name="Tice H."/>
            <person name="Pitluck S."/>
            <person name="Chain P."/>
            <person name="Malfatti S."/>
            <person name="Shin M."/>
            <person name="Vergez L."/>
            <person name="Schmutz J."/>
            <person name="Larimer F."/>
            <person name="Land M."/>
            <person name="Hauser L."/>
            <person name="Kyrpides N."/>
            <person name="Kim E."/>
            <person name="Taghavi S."/>
            <person name="Vangronsveld D."/>
            <person name="van der Lelie D."/>
            <person name="Richardson P."/>
        </authorList>
    </citation>
    <scope>NUCLEOTIDE SEQUENCE [LARGE SCALE GENOMIC DNA]</scope>
    <source>
        <strain>W619</strain>
    </source>
</reference>
<sequence length="579" mass="64620">MIVSPHKASRIPGNRLRKALMASAALVGLMSAGQLWAFNLDDVAAKAKDLAGQKYEAPKSNLPAVFRDMKFADYQKIRFLQEKAEWAKDKTPFKLSFYHQGMHFDTPVKINEVTATTVEEIKYDPSRFEFGDVPHDPETTKNLGYAGFRVLYPINKADKQDEIMTLLGASYFRVVGKGHVYGLSARGLAIDTALPSGEEFPRFTEFWVEKPKPADKHLVIYALLDSPRSTGAYKLILRPGNDTVVDVQSRVFLRDHVSRLGIAPLTSMYLFGPNQPSKVMNYRPALHDSEGLSIHAGNGEWLWRPLNNPKHLSVSNFSVENPRGFGLMQRHRDFKDYEDLDDNYQKRPSAWIEPKGDWGKGTVDLVEIPTADETNDNIVAFWSPETLPEPGKPFEYDYRMHWTIDESRFQAQELGSVTQTMRSTGDVKQSNLIRQPDGSVAFLVDFAGPALAALPEDAAVRSQISVGDNAEVVENNLRYNPETKGWRLTLRMKIKEANKATEMRAALVRDVPVEAAKPAEEAKHDKTAAKHGKAEKAAKAEQSANAEQPAADAASTNGTPATTEKVLTETWSYQLPADE</sequence>
<name>OPGG_PSEPW</name>
<proteinExistence type="inferred from homology"/>
<comment type="function">
    <text evidence="1">Involved in the biosynthesis of osmoregulated periplasmic glucans (OPGs).</text>
</comment>
<comment type="pathway">
    <text evidence="1">Glycan metabolism; osmoregulated periplasmic glucan (OPG) biosynthesis.</text>
</comment>
<comment type="subcellular location">
    <subcellularLocation>
        <location evidence="1">Periplasm</location>
    </subcellularLocation>
</comment>
<comment type="similarity">
    <text evidence="1">Belongs to the OpgD/OpgG family.</text>
</comment>
<dbReference type="EMBL" id="CP000949">
    <property type="protein sequence ID" value="ACA70944.1"/>
    <property type="molecule type" value="Genomic_DNA"/>
</dbReference>
<dbReference type="SMR" id="B1J2R3"/>
<dbReference type="STRING" id="390235.PputW619_0439"/>
<dbReference type="KEGG" id="ppw:PputW619_0439"/>
<dbReference type="eggNOG" id="COG3131">
    <property type="taxonomic scope" value="Bacteria"/>
</dbReference>
<dbReference type="HOGENOM" id="CLU_023403_2_0_6"/>
<dbReference type="UniPathway" id="UPA00637"/>
<dbReference type="GO" id="GO:0030288">
    <property type="term" value="C:outer membrane-bounded periplasmic space"/>
    <property type="evidence" value="ECO:0007669"/>
    <property type="project" value="TreeGrafter"/>
</dbReference>
<dbReference type="GO" id="GO:0030246">
    <property type="term" value="F:carbohydrate binding"/>
    <property type="evidence" value="ECO:0007669"/>
    <property type="project" value="InterPro"/>
</dbReference>
<dbReference type="GO" id="GO:0003824">
    <property type="term" value="F:catalytic activity"/>
    <property type="evidence" value="ECO:0007669"/>
    <property type="project" value="InterPro"/>
</dbReference>
<dbReference type="GO" id="GO:0051274">
    <property type="term" value="P:beta-glucan biosynthetic process"/>
    <property type="evidence" value="ECO:0007669"/>
    <property type="project" value="TreeGrafter"/>
</dbReference>
<dbReference type="FunFam" id="2.70.98.10:FF:000001">
    <property type="entry name" value="Glucans biosynthesis protein G"/>
    <property type="match status" value="1"/>
</dbReference>
<dbReference type="Gene3D" id="2.70.98.10">
    <property type="match status" value="1"/>
</dbReference>
<dbReference type="Gene3D" id="2.60.40.10">
    <property type="entry name" value="Immunoglobulins"/>
    <property type="match status" value="1"/>
</dbReference>
<dbReference type="HAMAP" id="MF_01069">
    <property type="entry name" value="MdoG_OpgG"/>
    <property type="match status" value="1"/>
</dbReference>
<dbReference type="InterPro" id="IPR011013">
    <property type="entry name" value="Gal_mutarotase_sf_dom"/>
</dbReference>
<dbReference type="InterPro" id="IPR014718">
    <property type="entry name" value="GH-type_carb-bd"/>
</dbReference>
<dbReference type="InterPro" id="IPR014438">
    <property type="entry name" value="Glucan_biosyn_MdoG/MdoD"/>
</dbReference>
<dbReference type="InterPro" id="IPR007444">
    <property type="entry name" value="Glucan_biosyn_MdoG_C"/>
</dbReference>
<dbReference type="InterPro" id="IPR013783">
    <property type="entry name" value="Ig-like_fold"/>
</dbReference>
<dbReference type="InterPro" id="IPR014756">
    <property type="entry name" value="Ig_E-set"/>
</dbReference>
<dbReference type="InterPro" id="IPR023704">
    <property type="entry name" value="MdoG_OpgG"/>
</dbReference>
<dbReference type="PANTHER" id="PTHR30504">
    <property type="entry name" value="GLUCANS BIOSYNTHESIS PROTEIN"/>
    <property type="match status" value="1"/>
</dbReference>
<dbReference type="PANTHER" id="PTHR30504:SF4">
    <property type="entry name" value="GLUCANS BIOSYNTHESIS PROTEIN G"/>
    <property type="match status" value="1"/>
</dbReference>
<dbReference type="Pfam" id="PF04349">
    <property type="entry name" value="MdoG"/>
    <property type="match status" value="1"/>
</dbReference>
<dbReference type="PIRSF" id="PIRSF006281">
    <property type="entry name" value="MdoG"/>
    <property type="match status" value="1"/>
</dbReference>
<dbReference type="SUPFAM" id="SSF81296">
    <property type="entry name" value="E set domains"/>
    <property type="match status" value="1"/>
</dbReference>
<dbReference type="SUPFAM" id="SSF74650">
    <property type="entry name" value="Galactose mutarotase-like"/>
    <property type="match status" value="1"/>
</dbReference>
<feature type="signal peptide" evidence="1">
    <location>
        <begin position="1"/>
        <end position="37"/>
    </location>
</feature>
<feature type="chain" id="PRO_5000314592" description="Glucans biosynthesis protein G">
    <location>
        <begin position="38"/>
        <end position="579"/>
    </location>
</feature>
<feature type="region of interest" description="Disordered" evidence="2">
    <location>
        <begin position="516"/>
        <end position="579"/>
    </location>
</feature>
<feature type="compositionally biased region" description="Basic and acidic residues" evidence="2">
    <location>
        <begin position="517"/>
        <end position="539"/>
    </location>
</feature>